<accession>Q83GC9</accession>
<feature type="chain" id="PRO_0000132488" description="Small ribosomal subunit protein uS4">
    <location>
        <begin position="1"/>
        <end position="205"/>
    </location>
</feature>
<feature type="domain" description="S4 RNA-binding" evidence="1">
    <location>
        <begin position="91"/>
        <end position="149"/>
    </location>
</feature>
<organism>
    <name type="scientific">Tropheryma whipplei (strain Twist)</name>
    <name type="common">Whipple's bacillus</name>
    <dbReference type="NCBI Taxonomy" id="203267"/>
    <lineage>
        <taxon>Bacteria</taxon>
        <taxon>Bacillati</taxon>
        <taxon>Actinomycetota</taxon>
        <taxon>Actinomycetes</taxon>
        <taxon>Micrococcales</taxon>
        <taxon>Tropherymataceae</taxon>
        <taxon>Tropheryma</taxon>
    </lineage>
</organism>
<comment type="function">
    <text evidence="1">One of the primary rRNA binding proteins, it binds directly to 16S rRNA where it nucleates assembly of the body of the 30S subunit.</text>
</comment>
<comment type="function">
    <text evidence="1">With S5 and S12 plays an important role in translational accuracy.</text>
</comment>
<comment type="subunit">
    <text evidence="1">Part of the 30S ribosomal subunit. Contacts protein S5. The interaction surface between S4 and S5 is involved in control of translational fidelity.</text>
</comment>
<comment type="similarity">
    <text evidence="1">Belongs to the universal ribosomal protein uS4 family.</text>
</comment>
<comment type="sequence caution" evidence="2">
    <conflict type="erroneous initiation">
        <sequence resource="EMBL-CDS" id="AAO44475"/>
    </conflict>
</comment>
<reference key="1">
    <citation type="journal article" date="2003" name="Genome Res.">
        <title>Tropheryma whipplei twist: a human pathogenic Actinobacteria with a reduced genome.</title>
        <authorList>
            <person name="Raoult D."/>
            <person name="Ogata H."/>
            <person name="Audic S."/>
            <person name="Robert C."/>
            <person name="Suhre K."/>
            <person name="Drancourt M."/>
            <person name="Claverie J.-M."/>
        </authorList>
    </citation>
    <scope>NUCLEOTIDE SEQUENCE [LARGE SCALE GENOMIC DNA]</scope>
    <source>
        <strain>Twist</strain>
    </source>
</reference>
<gene>
    <name evidence="1" type="primary">rpsD</name>
    <name type="ordered locus">TWT_378</name>
</gene>
<protein>
    <recommendedName>
        <fullName evidence="1">Small ribosomal subunit protein uS4</fullName>
    </recommendedName>
    <alternativeName>
        <fullName evidence="2">30S ribosomal protein S4</fullName>
    </alternativeName>
</protein>
<keyword id="KW-1185">Reference proteome</keyword>
<keyword id="KW-0687">Ribonucleoprotein</keyword>
<keyword id="KW-0689">Ribosomal protein</keyword>
<keyword id="KW-0694">RNA-binding</keyword>
<keyword id="KW-0699">rRNA-binding</keyword>
<dbReference type="EMBL" id="AE014184">
    <property type="protein sequence ID" value="AAO44475.1"/>
    <property type="status" value="ALT_INIT"/>
    <property type="molecule type" value="Genomic_DNA"/>
</dbReference>
<dbReference type="RefSeq" id="WP_011096343.1">
    <property type="nucleotide sequence ID" value="NC_004572.3"/>
</dbReference>
<dbReference type="SMR" id="Q83GC9"/>
<dbReference type="STRING" id="203267.TWT_378"/>
<dbReference type="GeneID" id="67388170"/>
<dbReference type="KEGG" id="twh:TWT_378"/>
<dbReference type="eggNOG" id="COG0522">
    <property type="taxonomic scope" value="Bacteria"/>
</dbReference>
<dbReference type="HOGENOM" id="CLU_092403_0_3_11"/>
<dbReference type="OrthoDB" id="9803672at2"/>
<dbReference type="Proteomes" id="UP000002200">
    <property type="component" value="Chromosome"/>
</dbReference>
<dbReference type="GO" id="GO:0015935">
    <property type="term" value="C:small ribosomal subunit"/>
    <property type="evidence" value="ECO:0007669"/>
    <property type="project" value="InterPro"/>
</dbReference>
<dbReference type="GO" id="GO:0019843">
    <property type="term" value="F:rRNA binding"/>
    <property type="evidence" value="ECO:0007669"/>
    <property type="project" value="UniProtKB-UniRule"/>
</dbReference>
<dbReference type="GO" id="GO:0003735">
    <property type="term" value="F:structural constituent of ribosome"/>
    <property type="evidence" value="ECO:0007669"/>
    <property type="project" value="InterPro"/>
</dbReference>
<dbReference type="GO" id="GO:0042274">
    <property type="term" value="P:ribosomal small subunit biogenesis"/>
    <property type="evidence" value="ECO:0007669"/>
    <property type="project" value="TreeGrafter"/>
</dbReference>
<dbReference type="GO" id="GO:0006412">
    <property type="term" value="P:translation"/>
    <property type="evidence" value="ECO:0007669"/>
    <property type="project" value="UniProtKB-UniRule"/>
</dbReference>
<dbReference type="CDD" id="cd00165">
    <property type="entry name" value="S4"/>
    <property type="match status" value="1"/>
</dbReference>
<dbReference type="FunFam" id="3.10.290.10:FF:000001">
    <property type="entry name" value="30S ribosomal protein S4"/>
    <property type="match status" value="1"/>
</dbReference>
<dbReference type="Gene3D" id="1.10.1050.10">
    <property type="entry name" value="Ribosomal Protein S4 Delta 41, Chain A, domain 1"/>
    <property type="match status" value="1"/>
</dbReference>
<dbReference type="Gene3D" id="3.10.290.10">
    <property type="entry name" value="RNA-binding S4 domain"/>
    <property type="match status" value="1"/>
</dbReference>
<dbReference type="HAMAP" id="MF_01306_B">
    <property type="entry name" value="Ribosomal_uS4_B"/>
    <property type="match status" value="1"/>
</dbReference>
<dbReference type="InterPro" id="IPR022801">
    <property type="entry name" value="Ribosomal_uS4"/>
</dbReference>
<dbReference type="InterPro" id="IPR005709">
    <property type="entry name" value="Ribosomal_uS4_bac-type"/>
</dbReference>
<dbReference type="InterPro" id="IPR018079">
    <property type="entry name" value="Ribosomal_uS4_CS"/>
</dbReference>
<dbReference type="InterPro" id="IPR001912">
    <property type="entry name" value="Ribosomal_uS4_N"/>
</dbReference>
<dbReference type="InterPro" id="IPR002942">
    <property type="entry name" value="S4_RNA-bd"/>
</dbReference>
<dbReference type="InterPro" id="IPR036986">
    <property type="entry name" value="S4_RNA-bd_sf"/>
</dbReference>
<dbReference type="NCBIfam" id="NF003717">
    <property type="entry name" value="PRK05327.1"/>
    <property type="match status" value="1"/>
</dbReference>
<dbReference type="NCBIfam" id="TIGR01017">
    <property type="entry name" value="rpsD_bact"/>
    <property type="match status" value="1"/>
</dbReference>
<dbReference type="PANTHER" id="PTHR11831">
    <property type="entry name" value="30S 40S RIBOSOMAL PROTEIN"/>
    <property type="match status" value="1"/>
</dbReference>
<dbReference type="PANTHER" id="PTHR11831:SF4">
    <property type="entry name" value="SMALL RIBOSOMAL SUBUNIT PROTEIN US4M"/>
    <property type="match status" value="1"/>
</dbReference>
<dbReference type="Pfam" id="PF00163">
    <property type="entry name" value="Ribosomal_S4"/>
    <property type="match status" value="1"/>
</dbReference>
<dbReference type="Pfam" id="PF01479">
    <property type="entry name" value="S4"/>
    <property type="match status" value="1"/>
</dbReference>
<dbReference type="SMART" id="SM01390">
    <property type="entry name" value="Ribosomal_S4"/>
    <property type="match status" value="1"/>
</dbReference>
<dbReference type="SMART" id="SM00363">
    <property type="entry name" value="S4"/>
    <property type="match status" value="1"/>
</dbReference>
<dbReference type="SUPFAM" id="SSF55174">
    <property type="entry name" value="Alpha-L RNA-binding motif"/>
    <property type="match status" value="1"/>
</dbReference>
<dbReference type="PROSITE" id="PS00632">
    <property type="entry name" value="RIBOSOMAL_S4"/>
    <property type="match status" value="1"/>
</dbReference>
<dbReference type="PROSITE" id="PS50889">
    <property type="entry name" value="S4"/>
    <property type="match status" value="1"/>
</dbReference>
<proteinExistence type="inferred from homology"/>
<sequence length="205" mass="22975">MSSCSRTRLSRALGVPLTPKAARLMEVRPYPPGQHGRFRRKGDSDYAVRLREKQRLRGQYGLREKQLASVYHEARRVKGLAGENLVEMLEMRLDALVLRAAFARSISQARQLVVHRHILVDGKLVDRPSYSVSPGQTVKVKPKSVPLDPFQVAASGGHADVLPPIPGYIEADLEGLSFRLVRRPKRSEVPVTCNVQLVVEYYAAR</sequence>
<name>RS4_TROWT</name>
<evidence type="ECO:0000255" key="1">
    <source>
        <dbReference type="HAMAP-Rule" id="MF_01306"/>
    </source>
</evidence>
<evidence type="ECO:0000305" key="2"/>